<reference key="1">
    <citation type="journal article" date="1975" name="J. Mol. Evol.">
        <title>The amino acid sequence of myoglobin from skeletal muscles of red deer (Cervus elaphus).</title>
        <authorList>
            <person name="Votsch W."/>
            <person name="Anderer F.A."/>
        </authorList>
    </citation>
    <scope>PROTEIN SEQUENCE OF 2-154</scope>
    <source>
        <tissue>Skeletal muscle</tissue>
    </source>
</reference>
<protein>
    <recommendedName>
        <fullName>Myoglobin</fullName>
    </recommendedName>
    <alternativeName>
        <fullName evidence="1">Nitrite reductase MB</fullName>
        <ecNumber evidence="1">1.7.-.-</ecNumber>
    </alternativeName>
    <alternativeName>
        <fullName evidence="1">Pseudoperoxidase MB</fullName>
        <ecNumber evidence="1">1.11.1.-</ecNumber>
    </alternativeName>
</protein>
<proteinExistence type="evidence at protein level"/>
<dbReference type="EC" id="1.7.-.-" evidence="1"/>
<dbReference type="EC" id="1.11.1.-" evidence="1"/>
<dbReference type="PIR" id="A02512">
    <property type="entry name" value="MYDE"/>
</dbReference>
<dbReference type="SMR" id="P02191"/>
<dbReference type="GO" id="GO:0070062">
    <property type="term" value="C:extracellular exosome"/>
    <property type="evidence" value="ECO:0007669"/>
    <property type="project" value="TreeGrafter"/>
</dbReference>
<dbReference type="GO" id="GO:0016528">
    <property type="term" value="C:sarcoplasm"/>
    <property type="evidence" value="ECO:0000250"/>
    <property type="project" value="UniProtKB"/>
</dbReference>
<dbReference type="GO" id="GO:0020037">
    <property type="term" value="F:heme binding"/>
    <property type="evidence" value="ECO:0007669"/>
    <property type="project" value="InterPro"/>
</dbReference>
<dbReference type="GO" id="GO:0046872">
    <property type="term" value="F:metal ion binding"/>
    <property type="evidence" value="ECO:0007669"/>
    <property type="project" value="UniProtKB-KW"/>
</dbReference>
<dbReference type="GO" id="GO:0098809">
    <property type="term" value="F:nitrite reductase activity"/>
    <property type="evidence" value="ECO:0000250"/>
    <property type="project" value="UniProtKB"/>
</dbReference>
<dbReference type="GO" id="GO:0019825">
    <property type="term" value="F:oxygen binding"/>
    <property type="evidence" value="ECO:0007669"/>
    <property type="project" value="InterPro"/>
</dbReference>
<dbReference type="GO" id="GO:0005344">
    <property type="term" value="F:oxygen carrier activity"/>
    <property type="evidence" value="ECO:0000250"/>
    <property type="project" value="UniProtKB"/>
</dbReference>
<dbReference type="GO" id="GO:0004601">
    <property type="term" value="F:peroxidase activity"/>
    <property type="evidence" value="ECO:0000250"/>
    <property type="project" value="UniProtKB"/>
</dbReference>
<dbReference type="GO" id="GO:0019430">
    <property type="term" value="P:removal of superoxide radicals"/>
    <property type="evidence" value="ECO:0000250"/>
    <property type="project" value="UniProtKB"/>
</dbReference>
<dbReference type="Gene3D" id="6.10.140.2100">
    <property type="match status" value="1"/>
</dbReference>
<dbReference type="Gene3D" id="6.10.140.2110">
    <property type="match status" value="1"/>
</dbReference>
<dbReference type="InterPro" id="IPR000971">
    <property type="entry name" value="Globin"/>
</dbReference>
<dbReference type="InterPro" id="IPR009050">
    <property type="entry name" value="Globin-like_sf"/>
</dbReference>
<dbReference type="InterPro" id="IPR002335">
    <property type="entry name" value="Myoglobin"/>
</dbReference>
<dbReference type="PANTHER" id="PTHR47132">
    <property type="entry name" value="MYOGLOBIN"/>
    <property type="match status" value="1"/>
</dbReference>
<dbReference type="PANTHER" id="PTHR47132:SF1">
    <property type="entry name" value="MYOGLOBIN"/>
    <property type="match status" value="1"/>
</dbReference>
<dbReference type="Pfam" id="PF00042">
    <property type="entry name" value="Globin"/>
    <property type="match status" value="1"/>
</dbReference>
<dbReference type="PRINTS" id="PR00613">
    <property type="entry name" value="MYOGLOBIN"/>
</dbReference>
<dbReference type="SUPFAM" id="SSF46458">
    <property type="entry name" value="Globin-like"/>
    <property type="match status" value="1"/>
</dbReference>
<dbReference type="PROSITE" id="PS01033">
    <property type="entry name" value="GLOBIN"/>
    <property type="match status" value="1"/>
</dbReference>
<accession>P02191</accession>
<comment type="function">
    <text evidence="1">Monomeric heme protein which primary function is to store oxygen and facilitate its diffusion within muscle tissues. Reversibly binds oxygen through a pentacoordinated heme iron and enables its timely and efficient release as needed during periods of heightened demand. Depending on the oxidative conditions of tissues and cells, and in addition to its ability to bind oxygen, it also has a nitrite reductase activity whereby it regulates the production of bioactive nitric oxide. Under stress conditions, like hypoxia and anoxia, it also protects cells against reactive oxygen species thanks to its pseudoperoxidase activity.</text>
</comment>
<comment type="catalytic activity">
    <reaction evidence="1">
        <text>Fe(III)-heme b-[protein] + nitric oxide + H2O = Fe(II)-heme b-[protein] + nitrite + 2 H(+)</text>
        <dbReference type="Rhea" id="RHEA:77711"/>
        <dbReference type="Rhea" id="RHEA-COMP:18975"/>
        <dbReference type="Rhea" id="RHEA-COMP:18976"/>
        <dbReference type="ChEBI" id="CHEBI:15377"/>
        <dbReference type="ChEBI" id="CHEBI:15378"/>
        <dbReference type="ChEBI" id="CHEBI:16301"/>
        <dbReference type="ChEBI" id="CHEBI:16480"/>
        <dbReference type="ChEBI" id="CHEBI:55376"/>
        <dbReference type="ChEBI" id="CHEBI:60344"/>
    </reaction>
    <physiologicalReaction direction="right-to-left" evidence="1">
        <dbReference type="Rhea" id="RHEA:77713"/>
    </physiologicalReaction>
</comment>
<comment type="catalytic activity">
    <reaction evidence="1">
        <text>H2O2 + AH2 = A + 2 H2O</text>
        <dbReference type="Rhea" id="RHEA:30275"/>
        <dbReference type="ChEBI" id="CHEBI:13193"/>
        <dbReference type="ChEBI" id="CHEBI:15377"/>
        <dbReference type="ChEBI" id="CHEBI:16240"/>
        <dbReference type="ChEBI" id="CHEBI:17499"/>
    </reaction>
</comment>
<comment type="subunit">
    <text evidence="2">Monomeric.</text>
</comment>
<comment type="subcellular location">
    <subcellularLocation>
        <location evidence="1">Cytoplasm</location>
        <location evidence="1">Sarcoplasm</location>
    </subcellularLocation>
</comment>
<comment type="similarity">
    <text evidence="7">Belongs to the globin family.</text>
</comment>
<evidence type="ECO:0000250" key="1">
    <source>
        <dbReference type="UniProtKB" id="P02144"/>
    </source>
</evidence>
<evidence type="ECO:0000250" key="2">
    <source>
        <dbReference type="UniProtKB" id="P02185"/>
    </source>
</evidence>
<evidence type="ECO:0000250" key="3">
    <source>
        <dbReference type="UniProtKB" id="P02189"/>
    </source>
</evidence>
<evidence type="ECO:0000250" key="4">
    <source>
        <dbReference type="UniProtKB" id="P04247"/>
    </source>
</evidence>
<evidence type="ECO:0000250" key="5">
    <source>
        <dbReference type="UniProtKB" id="P68082"/>
    </source>
</evidence>
<evidence type="ECO:0000250" key="6">
    <source>
        <dbReference type="UniProtKB" id="Q9QZ76"/>
    </source>
</evidence>
<evidence type="ECO:0000255" key="7">
    <source>
        <dbReference type="PROSITE-ProRule" id="PRU00238"/>
    </source>
</evidence>
<evidence type="ECO:0000269" key="8">
    <source>
    </source>
</evidence>
<keyword id="KW-0963">Cytoplasm</keyword>
<keyword id="KW-0903">Direct protein sequencing</keyword>
<keyword id="KW-0349">Heme</keyword>
<keyword id="KW-0408">Iron</keyword>
<keyword id="KW-0479">Metal-binding</keyword>
<keyword id="KW-0514">Muscle protein</keyword>
<keyword id="KW-0560">Oxidoreductase</keyword>
<keyword id="KW-0561">Oxygen transport</keyword>
<keyword id="KW-0597">Phosphoprotein</keyword>
<keyword id="KW-0813">Transport</keyword>
<organism>
    <name type="scientific">Cervus elaphus</name>
    <name type="common">Red deer</name>
    <dbReference type="NCBI Taxonomy" id="9860"/>
    <lineage>
        <taxon>Eukaryota</taxon>
        <taxon>Metazoa</taxon>
        <taxon>Chordata</taxon>
        <taxon>Craniata</taxon>
        <taxon>Vertebrata</taxon>
        <taxon>Euteleostomi</taxon>
        <taxon>Mammalia</taxon>
        <taxon>Eutheria</taxon>
        <taxon>Laurasiatheria</taxon>
        <taxon>Artiodactyla</taxon>
        <taxon>Ruminantia</taxon>
        <taxon>Pecora</taxon>
        <taxon>Cervidae</taxon>
        <taxon>Cervinae</taxon>
        <taxon>Cervus</taxon>
    </lineage>
</organism>
<name>MYG_CEREL</name>
<sequence length="154" mass="17054">MGLSDGEWQLVLNAWGKVEADVAGHGQEVLIRLFTGHPETLEKFDKFKHLKTEAEMKASEDLKKHGNTVLTALGGILKKKGHHEAEVKHLAESHANKHKIPVKYLEFISDAIIHVLHAKHPSNFGADAQGAMSKALELFRNDMAAQYKVLGFQG</sequence>
<gene>
    <name type="primary">MB</name>
</gene>
<feature type="initiator methionine" description="Removed" evidence="8">
    <location>
        <position position="1"/>
    </location>
</feature>
<feature type="chain" id="PRO_0000053285" description="Myoglobin">
    <location>
        <begin position="2"/>
        <end position="154"/>
    </location>
</feature>
<feature type="domain" description="Globin" evidence="7">
    <location>
        <begin position="2"/>
        <end position="148"/>
    </location>
</feature>
<feature type="binding site" evidence="5">
    <location>
        <position position="65"/>
    </location>
    <ligand>
        <name>nitrite</name>
        <dbReference type="ChEBI" id="CHEBI:16301"/>
    </ligand>
</feature>
<feature type="binding site" evidence="3 7">
    <location>
        <position position="65"/>
    </location>
    <ligand>
        <name>O2</name>
        <dbReference type="ChEBI" id="CHEBI:15379"/>
    </ligand>
</feature>
<feature type="binding site" description="proximal binding residue" evidence="1">
    <location>
        <position position="94"/>
    </location>
    <ligand>
        <name>heme b</name>
        <dbReference type="ChEBI" id="CHEBI:60344"/>
    </ligand>
    <ligandPart>
        <name>Fe</name>
        <dbReference type="ChEBI" id="CHEBI:18248"/>
    </ligandPart>
</feature>
<feature type="modified residue" description="Phosphoserine" evidence="6">
    <location>
        <position position="4"/>
    </location>
</feature>
<feature type="modified residue" description="Phosphothreonine" evidence="4">
    <location>
        <position position="68"/>
    </location>
</feature>